<name>GST28_SCHJA</name>
<sequence>VKLIYFNGRGRAEPIRMILVAAGVEFEDERIEFQDWPKIKPTIPGGRLPIVKITDKRGDVKTMSESLAIARFIARKHNMMGDTDDEYYIIEKMIGQVEDVESEYHKTLIKPPEEKEKISKEILNGKVPILLQAICETLKESTGNLTVGDKVTLADVVLIASIDHITDLDKEFLTGKYPEIHKHRKHLLATSPKLAKYLSERHATAF</sequence>
<proteinExistence type="evidence at transcript level"/>
<accession>P26624</accession>
<reference key="1">
    <citation type="journal article" date="1990" name="Mol. Biochem. Parasitol.">
        <title>Comparison of the cloned genes of the 26- and 28-kilodalton glutathione S-transferases of Schistosoma japonicum and Schistosoma mansoni.</title>
        <authorList>
            <person name="Henkle K.J."/>
            <person name="Davern K.M."/>
            <person name="Wright M.D."/>
            <person name="Ramos A.J."/>
            <person name="Mitchell G.F."/>
        </authorList>
    </citation>
    <scope>NUCLEOTIDE SEQUENCE [MRNA]</scope>
    <source>
        <strain>Sorsogon / Philippines</strain>
    </source>
</reference>
<organism>
    <name type="scientific">Schistosoma japonicum</name>
    <name type="common">Blood fluke</name>
    <dbReference type="NCBI Taxonomy" id="6182"/>
    <lineage>
        <taxon>Eukaryota</taxon>
        <taxon>Metazoa</taxon>
        <taxon>Spiralia</taxon>
        <taxon>Lophotrochozoa</taxon>
        <taxon>Platyhelminthes</taxon>
        <taxon>Trematoda</taxon>
        <taxon>Digenea</taxon>
        <taxon>Strigeidida</taxon>
        <taxon>Schistosomatoidea</taxon>
        <taxon>Schistosomatidae</taxon>
        <taxon>Schistosoma</taxon>
    </lineage>
</organism>
<protein>
    <recommendedName>
        <fullName>Glutathione S-transferase class-mu 28 kDa isozyme</fullName>
        <shortName>GST 28</shortName>
        <ecNumber>2.5.1.18</ecNumber>
    </recommendedName>
    <alternativeName>
        <fullName>Sj28 antigen</fullName>
    </alternativeName>
    <alternativeName>
        <fullName>Sj28GST</fullName>
    </alternativeName>
</protein>
<comment type="function">
    <text>Conjugation of reduced glutathione to a wide number of exogenous and endogenous hydrophobic electrophiles.</text>
</comment>
<comment type="function">
    <text>GST isoenzymes appear to play a central role in the parasite detoxification system. Other functions are also suspected including a role in increasing the solubility of haematin in the parasite gut.</text>
</comment>
<comment type="catalytic activity">
    <reaction>
        <text>RX + glutathione = an S-substituted glutathione + a halide anion + H(+)</text>
        <dbReference type="Rhea" id="RHEA:16437"/>
        <dbReference type="ChEBI" id="CHEBI:15378"/>
        <dbReference type="ChEBI" id="CHEBI:16042"/>
        <dbReference type="ChEBI" id="CHEBI:17792"/>
        <dbReference type="ChEBI" id="CHEBI:57925"/>
        <dbReference type="ChEBI" id="CHEBI:90779"/>
        <dbReference type="EC" id="2.5.1.18"/>
    </reaction>
</comment>
<comment type="subunit">
    <text>Homodimer.</text>
</comment>
<comment type="miscellaneous">
    <text>There are at least two isoenzymes of GST in S.japonicum.</text>
</comment>
<comment type="similarity">
    <text evidence="3">Belongs to the GST superfamily. Mu family.</text>
</comment>
<dbReference type="EC" id="2.5.1.18"/>
<dbReference type="EMBL" id="M26914">
    <property type="protein sequence ID" value="AAA29890.1"/>
    <property type="molecule type" value="mRNA"/>
</dbReference>
<dbReference type="PIR" id="B44941">
    <property type="entry name" value="B44941"/>
</dbReference>
<dbReference type="SMR" id="P26624"/>
<dbReference type="BRENDA" id="2.5.1.18">
    <property type="organism ID" value="5607"/>
</dbReference>
<dbReference type="GO" id="GO:0004364">
    <property type="term" value="F:glutathione transferase activity"/>
    <property type="evidence" value="ECO:0007669"/>
    <property type="project" value="UniProtKB-EC"/>
</dbReference>
<dbReference type="GO" id="GO:0006749">
    <property type="term" value="P:glutathione metabolic process"/>
    <property type="evidence" value="ECO:0007669"/>
    <property type="project" value="TreeGrafter"/>
</dbReference>
<dbReference type="CDD" id="cd03192">
    <property type="entry name" value="GST_C_Sigma_like"/>
    <property type="match status" value="1"/>
</dbReference>
<dbReference type="CDD" id="cd03039">
    <property type="entry name" value="GST_N_Sigma_like"/>
    <property type="match status" value="1"/>
</dbReference>
<dbReference type="Gene3D" id="1.20.1050.10">
    <property type="match status" value="1"/>
</dbReference>
<dbReference type="Gene3D" id="3.40.30.10">
    <property type="entry name" value="Glutaredoxin"/>
    <property type="match status" value="1"/>
</dbReference>
<dbReference type="InterPro" id="IPR010987">
    <property type="entry name" value="Glutathione-S-Trfase_C-like"/>
</dbReference>
<dbReference type="InterPro" id="IPR036282">
    <property type="entry name" value="Glutathione-S-Trfase_C_sf"/>
</dbReference>
<dbReference type="InterPro" id="IPR040079">
    <property type="entry name" value="Glutathione_S-Trfase"/>
</dbReference>
<dbReference type="InterPro" id="IPR004045">
    <property type="entry name" value="Glutathione_S-Trfase_N"/>
</dbReference>
<dbReference type="InterPro" id="IPR004046">
    <property type="entry name" value="GST_C"/>
</dbReference>
<dbReference type="InterPro" id="IPR050213">
    <property type="entry name" value="GST_superfamily"/>
</dbReference>
<dbReference type="InterPro" id="IPR036249">
    <property type="entry name" value="Thioredoxin-like_sf"/>
</dbReference>
<dbReference type="PANTHER" id="PTHR11571">
    <property type="entry name" value="GLUTATHIONE S-TRANSFERASE"/>
    <property type="match status" value="1"/>
</dbReference>
<dbReference type="PANTHER" id="PTHR11571:SF150">
    <property type="entry name" value="GLUTATHIONE S-TRANSFERASE"/>
    <property type="match status" value="1"/>
</dbReference>
<dbReference type="Pfam" id="PF00043">
    <property type="entry name" value="GST_C"/>
    <property type="match status" value="1"/>
</dbReference>
<dbReference type="Pfam" id="PF02798">
    <property type="entry name" value="GST_N"/>
    <property type="match status" value="1"/>
</dbReference>
<dbReference type="SFLD" id="SFLDG01205">
    <property type="entry name" value="AMPS.1"/>
    <property type="match status" value="1"/>
</dbReference>
<dbReference type="SFLD" id="SFLDS00019">
    <property type="entry name" value="Glutathione_Transferase_(cytos"/>
    <property type="match status" value="1"/>
</dbReference>
<dbReference type="SUPFAM" id="SSF47616">
    <property type="entry name" value="GST C-terminal domain-like"/>
    <property type="match status" value="1"/>
</dbReference>
<dbReference type="SUPFAM" id="SSF52833">
    <property type="entry name" value="Thioredoxin-like"/>
    <property type="match status" value="1"/>
</dbReference>
<dbReference type="PROSITE" id="PS50405">
    <property type="entry name" value="GST_CTER"/>
    <property type="match status" value="1"/>
</dbReference>
<dbReference type="PROSITE" id="PS50404">
    <property type="entry name" value="GST_NTER"/>
    <property type="match status" value="1"/>
</dbReference>
<feature type="chain" id="PRO_0000185814" description="Glutathione S-transferase class-mu 28 kDa isozyme">
    <location>
        <begin position="1" status="less than"/>
        <end position="206"/>
    </location>
</feature>
<feature type="domain" description="GST N-terminal">
    <location>
        <begin position="1" status="less than"/>
        <end position="81"/>
    </location>
</feature>
<feature type="domain" description="GST C-terminal">
    <location>
        <begin position="83"/>
        <end position="206"/>
    </location>
</feature>
<feature type="binding site" evidence="2">
    <location>
        <begin position="5"/>
        <end position="6"/>
    </location>
    <ligand>
        <name>glutathione</name>
        <dbReference type="ChEBI" id="CHEBI:57925"/>
    </ligand>
</feature>
<feature type="binding site" evidence="1">
    <location>
        <position position="5"/>
    </location>
    <ligand>
        <name>glutathione</name>
        <dbReference type="ChEBI" id="CHEBI:57925"/>
    </ligand>
</feature>
<feature type="binding site" evidence="1">
    <location>
        <position position="11"/>
    </location>
    <ligand>
        <name>glutathione</name>
        <dbReference type="ChEBI" id="CHEBI:57925"/>
    </ligand>
</feature>
<feature type="binding site" evidence="2">
    <location>
        <begin position="36"/>
        <end position="40"/>
    </location>
    <ligand>
        <name>glutathione</name>
        <dbReference type="ChEBI" id="CHEBI:57925"/>
    </ligand>
</feature>
<feature type="binding site">
    <location>
        <position position="48"/>
    </location>
    <ligand>
        <name>glutathione</name>
        <dbReference type="ChEBI" id="CHEBI:57925"/>
    </ligand>
</feature>
<feature type="binding site" evidence="2">
    <location>
        <begin position="50"/>
        <end position="51"/>
    </location>
    <ligand>
        <name>glutathione</name>
        <dbReference type="ChEBI" id="CHEBI:57925"/>
    </ligand>
</feature>
<feature type="binding site" evidence="2">
    <location>
        <begin position="65"/>
        <end position="66"/>
    </location>
    <ligand>
        <name>glutathione</name>
        <dbReference type="ChEBI" id="CHEBI:57925"/>
    </ligand>
</feature>
<feature type="non-terminal residue">
    <location>
        <position position="1"/>
    </location>
</feature>
<keyword id="KW-0808">Transferase</keyword>
<evidence type="ECO:0000250" key="1"/>
<evidence type="ECO:0000250" key="2">
    <source>
        <dbReference type="UniProtKB" id="P08515"/>
    </source>
</evidence>
<evidence type="ECO:0000305" key="3"/>